<sequence length="548" mass="61792">MMKSIRYYLAFTAFIALYYVIPVNSRLLWQPDETRYAEISREMLASGDWIVPHFLGLRYFEKPIAGYWINSLGQWLFGATNFGVRAGAILTTLLAAALVAWLTFRLWRDKRTALLASVIFLSLFAVYSIGTYAVLDPMIALWLTAGMCCFWQGMQATTRTGKIGMFLLLGATCGLGVLTKGFLALAVPVVSVLPWVIVQKRWKDFLLYGWLAVLSCFVVVLPWAIAIARREADFWHYFFWVEHIQRFAMSDAQHKAPFWYYLPVLLAGSLPWLGLLPGALKLGWRERNGAFYLLGWTIMPLLFFSIAKGKLPTYVLSCFAPIAILMARFVLHNVKEGVAALRVNGGINLVFGIIGIVAAFVVSSWGPLKSPVWTHIETYKVFCVWGVFTVWAFVGWYSLCHSPKYLLPAFCPLGLALLFGFSVPDRVMESKQPQFFVEMTQAPLASSRYILADSVGVAAGLAWSLKRDDIMLYGHAGELRYGLSYPDVQNKFVKADDFNAWLNQHRQEGIITLVLSIDKDEDISALSLPPADNVDYQGRLVLIQYRPK</sequence>
<gene>
    <name evidence="1" type="primary">arnT</name>
    <name type="ordered locus">SSPA0526</name>
</gene>
<feature type="chain" id="PRO_0000380033" description="Undecaprenyl phosphate-alpha-4-amino-4-deoxy-L-arabinose arabinosyl transferase">
    <location>
        <begin position="1"/>
        <end position="548"/>
    </location>
</feature>
<feature type="transmembrane region" description="Helical" evidence="1">
    <location>
        <begin position="9"/>
        <end position="29"/>
    </location>
</feature>
<feature type="transmembrane region" description="Helical" evidence="1">
    <location>
        <begin position="82"/>
        <end position="102"/>
    </location>
</feature>
<feature type="transmembrane region" description="Helical" evidence="1">
    <location>
        <begin position="114"/>
        <end position="134"/>
    </location>
</feature>
<feature type="transmembrane region" description="Helical" evidence="1">
    <location>
        <begin position="137"/>
        <end position="157"/>
    </location>
</feature>
<feature type="transmembrane region" description="Helical" evidence="1">
    <location>
        <begin position="163"/>
        <end position="185"/>
    </location>
</feature>
<feature type="transmembrane region" description="Helical" evidence="1">
    <location>
        <begin position="205"/>
        <end position="225"/>
    </location>
</feature>
<feature type="transmembrane region" description="Helical" evidence="1">
    <location>
        <begin position="256"/>
        <end position="276"/>
    </location>
</feature>
<feature type="transmembrane region" description="Helical" evidence="1">
    <location>
        <begin position="289"/>
        <end position="309"/>
    </location>
</feature>
<feature type="transmembrane region" description="Helical" evidence="1">
    <location>
        <begin position="311"/>
        <end position="331"/>
    </location>
</feature>
<feature type="transmembrane region" description="Helical" evidence="1">
    <location>
        <begin position="345"/>
        <end position="365"/>
    </location>
</feature>
<feature type="transmembrane region" description="Helical" evidence="1">
    <location>
        <begin position="381"/>
        <end position="401"/>
    </location>
</feature>
<feature type="transmembrane region" description="Helical" evidence="1">
    <location>
        <begin position="405"/>
        <end position="425"/>
    </location>
</feature>
<protein>
    <recommendedName>
        <fullName evidence="1">Undecaprenyl phosphate-alpha-4-amino-4-deoxy-L-arabinose arabinosyl transferase</fullName>
        <ecNumber evidence="1">2.4.2.43</ecNumber>
    </recommendedName>
    <alternativeName>
        <fullName evidence="1">4-amino-4-deoxy-L-arabinose lipid A transferase</fullName>
    </alternativeName>
    <alternativeName>
        <fullName evidence="1">Lipid IV(A) 4-amino-4-deoxy-L-arabinosyltransferase</fullName>
    </alternativeName>
    <alternativeName>
        <fullName evidence="1">Undecaprenyl phosphate-alpha-L-Ara4N transferase</fullName>
    </alternativeName>
</protein>
<name>ARNT_SALPK</name>
<comment type="function">
    <text evidence="1">Catalyzes the transfer of the L-Ara4N moiety of the glycolipid undecaprenyl phosphate-alpha-L-Ara4N to lipid A. The modified arabinose is attached to lipid A and is required for resistance to polymyxin and cationic antimicrobial peptides.</text>
</comment>
<comment type="catalytic activity">
    <reaction evidence="1">
        <text>4-amino-4-deoxy-alpha-L-arabinopyranosyl di-trans,octa-cis-undecaprenyl phosphate + lipid IVA = lipid IIA + di-trans,octa-cis-undecaprenyl phosphate.</text>
        <dbReference type="EC" id="2.4.2.43"/>
    </reaction>
</comment>
<comment type="pathway">
    <text evidence="1">Lipopolysaccharide metabolism; 4-amino-4-deoxy-beta-L-arabinose-lipid A biosynthesis.</text>
</comment>
<comment type="subcellular location">
    <subcellularLocation>
        <location evidence="1">Cell inner membrane</location>
        <topology evidence="1">Multi-pass membrane protein</topology>
    </subcellularLocation>
</comment>
<comment type="similarity">
    <text evidence="1">Belongs to the glycosyltransferase 83 family.</text>
</comment>
<proteinExistence type="inferred from homology"/>
<keyword id="KW-0997">Cell inner membrane</keyword>
<keyword id="KW-1003">Cell membrane</keyword>
<keyword id="KW-0328">Glycosyltransferase</keyword>
<keyword id="KW-0441">Lipid A biosynthesis</keyword>
<keyword id="KW-0444">Lipid biosynthesis</keyword>
<keyword id="KW-0443">Lipid metabolism</keyword>
<keyword id="KW-0448">Lipopolysaccharide biosynthesis</keyword>
<keyword id="KW-0472">Membrane</keyword>
<keyword id="KW-0808">Transferase</keyword>
<keyword id="KW-0812">Transmembrane</keyword>
<keyword id="KW-1133">Transmembrane helix</keyword>
<evidence type="ECO:0000255" key="1">
    <source>
        <dbReference type="HAMAP-Rule" id="MF_01165"/>
    </source>
</evidence>
<dbReference type="EC" id="2.4.2.43" evidence="1"/>
<dbReference type="EMBL" id="FM200053">
    <property type="protein sequence ID" value="CAR58655.1"/>
    <property type="molecule type" value="Genomic_DNA"/>
</dbReference>
<dbReference type="RefSeq" id="WP_000978063.1">
    <property type="nucleotide sequence ID" value="NC_011147.1"/>
</dbReference>
<dbReference type="SMR" id="B5BCP4"/>
<dbReference type="CAZy" id="GT83">
    <property type="family name" value="Glycosyltransferase Family 83"/>
</dbReference>
<dbReference type="KEGG" id="sek:SSPA0526"/>
<dbReference type="HOGENOM" id="CLU_019200_2_1_6"/>
<dbReference type="UniPathway" id="UPA00037"/>
<dbReference type="Proteomes" id="UP000001869">
    <property type="component" value="Chromosome"/>
</dbReference>
<dbReference type="GO" id="GO:0005886">
    <property type="term" value="C:plasma membrane"/>
    <property type="evidence" value="ECO:0007669"/>
    <property type="project" value="UniProtKB-SubCell"/>
</dbReference>
<dbReference type="GO" id="GO:0103015">
    <property type="term" value="F:4-amino-4-deoxy-L-arabinose transferase activity"/>
    <property type="evidence" value="ECO:0007669"/>
    <property type="project" value="UniProtKB-EC"/>
</dbReference>
<dbReference type="GO" id="GO:0000030">
    <property type="term" value="F:mannosyltransferase activity"/>
    <property type="evidence" value="ECO:0007669"/>
    <property type="project" value="InterPro"/>
</dbReference>
<dbReference type="GO" id="GO:0009245">
    <property type="term" value="P:lipid A biosynthetic process"/>
    <property type="evidence" value="ECO:0007669"/>
    <property type="project" value="UniProtKB-UniRule"/>
</dbReference>
<dbReference type="GO" id="GO:0009103">
    <property type="term" value="P:lipopolysaccharide biosynthetic process"/>
    <property type="evidence" value="ECO:0007669"/>
    <property type="project" value="UniProtKB-KW"/>
</dbReference>
<dbReference type="GO" id="GO:0006493">
    <property type="term" value="P:protein O-linked glycosylation"/>
    <property type="evidence" value="ECO:0007669"/>
    <property type="project" value="InterPro"/>
</dbReference>
<dbReference type="GO" id="GO:0010041">
    <property type="term" value="P:response to iron(III) ion"/>
    <property type="evidence" value="ECO:0007669"/>
    <property type="project" value="TreeGrafter"/>
</dbReference>
<dbReference type="HAMAP" id="MF_01165">
    <property type="entry name" value="ArnT_transfer"/>
    <property type="match status" value="1"/>
</dbReference>
<dbReference type="InterPro" id="IPR022839">
    <property type="entry name" value="ArnT_tfrase"/>
</dbReference>
<dbReference type="InterPro" id="IPR003342">
    <property type="entry name" value="Glyco_trans_39/83"/>
</dbReference>
<dbReference type="InterPro" id="IPR050297">
    <property type="entry name" value="LipidA_mod_glycosyltrf_83"/>
</dbReference>
<dbReference type="NCBIfam" id="NF009784">
    <property type="entry name" value="PRK13279.1"/>
    <property type="match status" value="1"/>
</dbReference>
<dbReference type="PANTHER" id="PTHR33908">
    <property type="entry name" value="MANNOSYLTRANSFERASE YKCB-RELATED"/>
    <property type="match status" value="1"/>
</dbReference>
<dbReference type="PANTHER" id="PTHR33908:SF3">
    <property type="entry name" value="UNDECAPRENYL PHOSPHATE-ALPHA-4-AMINO-4-DEOXY-L-ARABINOSE ARABINOSYL TRANSFERASE"/>
    <property type="match status" value="1"/>
</dbReference>
<dbReference type="Pfam" id="PF02366">
    <property type="entry name" value="PMT"/>
    <property type="match status" value="1"/>
</dbReference>
<organism>
    <name type="scientific">Salmonella paratyphi A (strain AKU_12601)</name>
    <dbReference type="NCBI Taxonomy" id="554290"/>
    <lineage>
        <taxon>Bacteria</taxon>
        <taxon>Pseudomonadati</taxon>
        <taxon>Pseudomonadota</taxon>
        <taxon>Gammaproteobacteria</taxon>
        <taxon>Enterobacterales</taxon>
        <taxon>Enterobacteriaceae</taxon>
        <taxon>Salmonella</taxon>
    </lineage>
</organism>
<reference key="1">
    <citation type="journal article" date="2009" name="BMC Genomics">
        <title>Pseudogene accumulation in the evolutionary histories of Salmonella enterica serovars Paratyphi A and Typhi.</title>
        <authorList>
            <person name="Holt K.E."/>
            <person name="Thomson N.R."/>
            <person name="Wain J."/>
            <person name="Langridge G.C."/>
            <person name="Hasan R."/>
            <person name="Bhutta Z.A."/>
            <person name="Quail M.A."/>
            <person name="Norbertczak H."/>
            <person name="Walker D."/>
            <person name="Simmonds M."/>
            <person name="White B."/>
            <person name="Bason N."/>
            <person name="Mungall K."/>
            <person name="Dougan G."/>
            <person name="Parkhill J."/>
        </authorList>
    </citation>
    <scope>NUCLEOTIDE SEQUENCE [LARGE SCALE GENOMIC DNA]</scope>
    <source>
        <strain>AKU_12601</strain>
    </source>
</reference>
<accession>B5BCP4</accession>